<proteinExistence type="inferred from homology"/>
<accession>A4XA62</accession>
<organism>
    <name type="scientific">Salinispora tropica (strain ATCC BAA-916 / DSM 44818 / JCM 13857 / NBRC 105044 / CNB-440)</name>
    <dbReference type="NCBI Taxonomy" id="369723"/>
    <lineage>
        <taxon>Bacteria</taxon>
        <taxon>Bacillati</taxon>
        <taxon>Actinomycetota</taxon>
        <taxon>Actinomycetes</taxon>
        <taxon>Micromonosporales</taxon>
        <taxon>Micromonosporaceae</taxon>
        <taxon>Salinispora</taxon>
    </lineage>
</organism>
<keyword id="KW-0030">Aminoacyl-tRNA synthetase</keyword>
<keyword id="KW-0067">ATP-binding</keyword>
<keyword id="KW-0963">Cytoplasm</keyword>
<keyword id="KW-0436">Ligase</keyword>
<keyword id="KW-0479">Metal-binding</keyword>
<keyword id="KW-0547">Nucleotide-binding</keyword>
<keyword id="KW-0648">Protein biosynthesis</keyword>
<keyword id="KW-1185">Reference proteome</keyword>
<keyword id="KW-0862">Zinc</keyword>
<gene>
    <name evidence="1" type="primary">gltX</name>
    <name type="ordered locus">Strop_3375</name>
</gene>
<dbReference type="EC" id="6.1.1.17" evidence="1"/>
<dbReference type="EMBL" id="CP000667">
    <property type="protein sequence ID" value="ABP55808.1"/>
    <property type="molecule type" value="Genomic_DNA"/>
</dbReference>
<dbReference type="SMR" id="A4XA62"/>
<dbReference type="STRING" id="369723.Strop_3375"/>
<dbReference type="KEGG" id="stp:Strop_3375"/>
<dbReference type="eggNOG" id="COG0008">
    <property type="taxonomic scope" value="Bacteria"/>
</dbReference>
<dbReference type="HOGENOM" id="CLU_015768_6_3_11"/>
<dbReference type="Proteomes" id="UP000000235">
    <property type="component" value="Chromosome"/>
</dbReference>
<dbReference type="GO" id="GO:0005829">
    <property type="term" value="C:cytosol"/>
    <property type="evidence" value="ECO:0007669"/>
    <property type="project" value="TreeGrafter"/>
</dbReference>
<dbReference type="GO" id="GO:0005524">
    <property type="term" value="F:ATP binding"/>
    <property type="evidence" value="ECO:0007669"/>
    <property type="project" value="UniProtKB-UniRule"/>
</dbReference>
<dbReference type="GO" id="GO:0004818">
    <property type="term" value="F:glutamate-tRNA ligase activity"/>
    <property type="evidence" value="ECO:0007669"/>
    <property type="project" value="UniProtKB-UniRule"/>
</dbReference>
<dbReference type="GO" id="GO:0000049">
    <property type="term" value="F:tRNA binding"/>
    <property type="evidence" value="ECO:0007669"/>
    <property type="project" value="InterPro"/>
</dbReference>
<dbReference type="GO" id="GO:0008270">
    <property type="term" value="F:zinc ion binding"/>
    <property type="evidence" value="ECO:0007669"/>
    <property type="project" value="InterPro"/>
</dbReference>
<dbReference type="GO" id="GO:0006424">
    <property type="term" value="P:glutamyl-tRNA aminoacylation"/>
    <property type="evidence" value="ECO:0007669"/>
    <property type="project" value="UniProtKB-UniRule"/>
</dbReference>
<dbReference type="CDD" id="cd00808">
    <property type="entry name" value="GluRS_core"/>
    <property type="match status" value="1"/>
</dbReference>
<dbReference type="Gene3D" id="1.10.10.350">
    <property type="match status" value="1"/>
</dbReference>
<dbReference type="Gene3D" id="1.10.8.70">
    <property type="entry name" value="Glutamate-tRNA synthetase, class I, anticodon-binding domain 1"/>
    <property type="match status" value="1"/>
</dbReference>
<dbReference type="Gene3D" id="3.40.50.620">
    <property type="entry name" value="HUPs"/>
    <property type="match status" value="1"/>
</dbReference>
<dbReference type="HAMAP" id="MF_00022">
    <property type="entry name" value="Glu_tRNA_synth_type1"/>
    <property type="match status" value="1"/>
</dbReference>
<dbReference type="InterPro" id="IPR045462">
    <property type="entry name" value="aa-tRNA-synth_I_cd-bd"/>
</dbReference>
<dbReference type="InterPro" id="IPR020751">
    <property type="entry name" value="aa-tRNA-synth_I_codon-bd_sub2"/>
</dbReference>
<dbReference type="InterPro" id="IPR001412">
    <property type="entry name" value="aa-tRNA-synth_I_CS"/>
</dbReference>
<dbReference type="InterPro" id="IPR008925">
    <property type="entry name" value="aa_tRNA-synth_I_cd-bd_sf"/>
</dbReference>
<dbReference type="InterPro" id="IPR004527">
    <property type="entry name" value="Glu-tRNA-ligase_bac/mito"/>
</dbReference>
<dbReference type="InterPro" id="IPR020752">
    <property type="entry name" value="Glu-tRNA-synth_I_codon-bd_sub1"/>
</dbReference>
<dbReference type="InterPro" id="IPR000924">
    <property type="entry name" value="Glu/Gln-tRNA-synth"/>
</dbReference>
<dbReference type="InterPro" id="IPR020058">
    <property type="entry name" value="Glu/Gln-tRNA-synth_Ib_cat-dom"/>
</dbReference>
<dbReference type="InterPro" id="IPR049940">
    <property type="entry name" value="GluQ/Sye"/>
</dbReference>
<dbReference type="InterPro" id="IPR033910">
    <property type="entry name" value="GluRS_core"/>
</dbReference>
<dbReference type="InterPro" id="IPR014729">
    <property type="entry name" value="Rossmann-like_a/b/a_fold"/>
</dbReference>
<dbReference type="NCBIfam" id="TIGR00464">
    <property type="entry name" value="gltX_bact"/>
    <property type="match status" value="1"/>
</dbReference>
<dbReference type="PANTHER" id="PTHR43311">
    <property type="entry name" value="GLUTAMATE--TRNA LIGASE"/>
    <property type="match status" value="1"/>
</dbReference>
<dbReference type="PANTHER" id="PTHR43311:SF2">
    <property type="entry name" value="GLUTAMATE--TRNA LIGASE, MITOCHONDRIAL-RELATED"/>
    <property type="match status" value="1"/>
</dbReference>
<dbReference type="Pfam" id="PF19269">
    <property type="entry name" value="Anticodon_2"/>
    <property type="match status" value="1"/>
</dbReference>
<dbReference type="Pfam" id="PF00749">
    <property type="entry name" value="tRNA-synt_1c"/>
    <property type="match status" value="1"/>
</dbReference>
<dbReference type="PRINTS" id="PR00987">
    <property type="entry name" value="TRNASYNTHGLU"/>
</dbReference>
<dbReference type="SUPFAM" id="SSF48163">
    <property type="entry name" value="An anticodon-binding domain of class I aminoacyl-tRNA synthetases"/>
    <property type="match status" value="1"/>
</dbReference>
<dbReference type="SUPFAM" id="SSF52374">
    <property type="entry name" value="Nucleotidylyl transferase"/>
    <property type="match status" value="1"/>
</dbReference>
<dbReference type="PROSITE" id="PS00178">
    <property type="entry name" value="AA_TRNA_LIGASE_I"/>
    <property type="match status" value="1"/>
</dbReference>
<evidence type="ECO:0000255" key="1">
    <source>
        <dbReference type="HAMAP-Rule" id="MF_00022"/>
    </source>
</evidence>
<reference key="1">
    <citation type="journal article" date="2007" name="Proc. Natl. Acad. Sci. U.S.A.">
        <title>Genome sequencing reveals complex secondary metabolome in the marine actinomycete Salinispora tropica.</title>
        <authorList>
            <person name="Udwary D.W."/>
            <person name="Zeigler L."/>
            <person name="Asolkar R.N."/>
            <person name="Singan V."/>
            <person name="Lapidus A."/>
            <person name="Fenical W."/>
            <person name="Jensen P.R."/>
            <person name="Moore B.S."/>
        </authorList>
    </citation>
    <scope>NUCLEOTIDE SEQUENCE [LARGE SCALE GENOMIC DNA]</scope>
    <source>
        <strain>ATCC BAA-916 / DSM 44818 / JCM 13857 / NBRC 105044 / CNB-440</strain>
    </source>
</reference>
<feature type="chain" id="PRO_0000367766" description="Glutamate--tRNA ligase">
    <location>
        <begin position="1"/>
        <end position="465"/>
    </location>
</feature>
<feature type="short sequence motif" description="'HIGH' region" evidence="1">
    <location>
        <begin position="5"/>
        <end position="15"/>
    </location>
</feature>
<feature type="short sequence motif" description="'KMSKS' region" evidence="1">
    <location>
        <begin position="228"/>
        <end position="232"/>
    </location>
</feature>
<feature type="binding site" evidence="1">
    <location>
        <position position="96"/>
    </location>
    <ligand>
        <name>Zn(2+)</name>
        <dbReference type="ChEBI" id="CHEBI:29105"/>
    </ligand>
</feature>
<feature type="binding site" evidence="1">
    <location>
        <position position="98"/>
    </location>
    <ligand>
        <name>Zn(2+)</name>
        <dbReference type="ChEBI" id="CHEBI:29105"/>
    </ligand>
</feature>
<feature type="binding site" evidence="1">
    <location>
        <position position="118"/>
    </location>
    <ligand>
        <name>Zn(2+)</name>
        <dbReference type="ChEBI" id="CHEBI:29105"/>
    </ligand>
</feature>
<feature type="binding site" evidence="1">
    <location>
        <position position="120"/>
    </location>
    <ligand>
        <name>Zn(2+)</name>
        <dbReference type="ChEBI" id="CHEBI:29105"/>
    </ligand>
</feature>
<feature type="binding site" evidence="1">
    <location>
        <position position="231"/>
    </location>
    <ligand>
        <name>ATP</name>
        <dbReference type="ChEBI" id="CHEBI:30616"/>
    </ligand>
</feature>
<name>SYE_SALTO</name>
<protein>
    <recommendedName>
        <fullName evidence="1">Glutamate--tRNA ligase</fullName>
        <ecNumber evidence="1">6.1.1.17</ecNumber>
    </recommendedName>
    <alternativeName>
        <fullName evidence="1">Glutamyl-tRNA synthetase</fullName>
        <shortName evidence="1">GluRS</shortName>
    </alternativeName>
</protein>
<comment type="function">
    <text evidence="1">Catalyzes the attachment of glutamate to tRNA(Glu) in a two-step reaction: glutamate is first activated by ATP to form Glu-AMP and then transferred to the acceptor end of tRNA(Glu).</text>
</comment>
<comment type="catalytic activity">
    <reaction evidence="1">
        <text>tRNA(Glu) + L-glutamate + ATP = L-glutamyl-tRNA(Glu) + AMP + diphosphate</text>
        <dbReference type="Rhea" id="RHEA:23540"/>
        <dbReference type="Rhea" id="RHEA-COMP:9663"/>
        <dbReference type="Rhea" id="RHEA-COMP:9680"/>
        <dbReference type="ChEBI" id="CHEBI:29985"/>
        <dbReference type="ChEBI" id="CHEBI:30616"/>
        <dbReference type="ChEBI" id="CHEBI:33019"/>
        <dbReference type="ChEBI" id="CHEBI:78442"/>
        <dbReference type="ChEBI" id="CHEBI:78520"/>
        <dbReference type="ChEBI" id="CHEBI:456215"/>
        <dbReference type="EC" id="6.1.1.17"/>
    </reaction>
</comment>
<comment type="cofactor">
    <cofactor evidence="1">
        <name>Zn(2+)</name>
        <dbReference type="ChEBI" id="CHEBI:29105"/>
    </cofactor>
    <text evidence="1">Binds 1 zinc ion per subunit.</text>
</comment>
<comment type="subunit">
    <text evidence="1">Monomer.</text>
</comment>
<comment type="subcellular location">
    <subcellularLocation>
        <location evidence="1">Cytoplasm</location>
    </subcellularLocation>
</comment>
<comment type="similarity">
    <text evidence="1">Belongs to the class-I aminoacyl-tRNA synthetase family. Glutamate--tRNA ligase type 1 subfamily.</text>
</comment>
<sequence>MRFAPSPTGMFHVGGARSALQNWIFAKQQGGVFVLRVEDTDAARNKPEWTEGILAALEWIGIARGSYEGPYFQSSYATEHRAAASRLHEGGRAYYCDCTREVVQARTGSPHTGYDGFCRDRNLGPGAGRALRFRTPDEGATVVVDLIRGEPTFDNRLIEDFVIARSDGSPVFLLANVVDDMTMGITHVIRAEEHLPNTPKQQLLWDALGVKPPVWAHVPVVVNEKRQKLSKRRDKVALEAYRDEGYLADAMCNYLMLLGWAPSGDREIVPWPVIEEEFRLEEVNPSSAFFDEKKLRAFNGEYIRALPIAEFIAGCQPWLTGTATIAPPPWQPDEFDAEAFAAVAPLAQTRIAVLSEIVPNVDFLFLDSPLIDEGAWAKAMKEGAGDLLDAVIAAFTALPSWDADSTKSTLEAVGAEHGLKLGKAQAPVRVAVTGRRVGLPLFESLEVLGRERTLTRLRAARLRLP</sequence>